<sequence>MESLRIYNTLARDKQVFVPRQPGEVRMYVCGITVYDYCHVGHARMLVVFDLVQRWLRAIGYRVTYVRNITDIDDKIIRRAVENGETIKSLTDRFIGAMHEDETALGIQRPDVEPRATQFIPQMLGMIETLETNGYAYQAADGDVNYSVRKFADYGKLSGKSLDDLRAGERVAANDAKQDPLDFVLWKRAKADEPEGASWASKYGMGRPGWHIECSAMGCSLLGNHFDIHGGGQDLQFPHHENEIAQSEGATGETFVNYWMHNGFVQVDNEKMSKSLGNFFTIREVLERYDAEVVRFFIVRTHYRSPLNYSDVHLDDARASLTRLYTALKDVEPDTLALDWNEPHAQRFAAAMNDDFNTPVAVATLFELAGEVNRTRDASLARQLKQLAGLLGLLGREPRAFLQQASGAAQAGGLAADEIEAQIAARVAAKQAKDYAEADRIRAELLEAGIALEDKPGGSTEWRRV</sequence>
<gene>
    <name evidence="1" type="primary">cysS</name>
    <name type="ordered locus">Bcen_5999</name>
</gene>
<protein>
    <recommendedName>
        <fullName evidence="1">Cysteine--tRNA ligase</fullName>
        <ecNumber evidence="1">6.1.1.16</ecNumber>
    </recommendedName>
    <alternativeName>
        <fullName evidence="1">Cysteinyl-tRNA synthetase</fullName>
        <shortName evidence="1">CysRS</shortName>
    </alternativeName>
</protein>
<organism>
    <name type="scientific">Burkholderia orbicola (strain AU 1054)</name>
    <dbReference type="NCBI Taxonomy" id="331271"/>
    <lineage>
        <taxon>Bacteria</taxon>
        <taxon>Pseudomonadati</taxon>
        <taxon>Pseudomonadota</taxon>
        <taxon>Betaproteobacteria</taxon>
        <taxon>Burkholderiales</taxon>
        <taxon>Burkholderiaceae</taxon>
        <taxon>Burkholderia</taxon>
        <taxon>Burkholderia cepacia complex</taxon>
        <taxon>Burkholderia orbicola</taxon>
    </lineage>
</organism>
<comment type="catalytic activity">
    <reaction evidence="1">
        <text>tRNA(Cys) + L-cysteine + ATP = L-cysteinyl-tRNA(Cys) + AMP + diphosphate</text>
        <dbReference type="Rhea" id="RHEA:17773"/>
        <dbReference type="Rhea" id="RHEA-COMP:9661"/>
        <dbReference type="Rhea" id="RHEA-COMP:9679"/>
        <dbReference type="ChEBI" id="CHEBI:30616"/>
        <dbReference type="ChEBI" id="CHEBI:33019"/>
        <dbReference type="ChEBI" id="CHEBI:35235"/>
        <dbReference type="ChEBI" id="CHEBI:78442"/>
        <dbReference type="ChEBI" id="CHEBI:78517"/>
        <dbReference type="ChEBI" id="CHEBI:456215"/>
        <dbReference type="EC" id="6.1.1.16"/>
    </reaction>
</comment>
<comment type="cofactor">
    <cofactor evidence="1">
        <name>Zn(2+)</name>
        <dbReference type="ChEBI" id="CHEBI:29105"/>
    </cofactor>
    <text evidence="1">Binds 1 zinc ion per subunit.</text>
</comment>
<comment type="subunit">
    <text evidence="1">Monomer.</text>
</comment>
<comment type="subcellular location">
    <subcellularLocation>
        <location evidence="1">Cytoplasm</location>
    </subcellularLocation>
</comment>
<comment type="similarity">
    <text evidence="1">Belongs to the class-I aminoacyl-tRNA synthetase family.</text>
</comment>
<keyword id="KW-0030">Aminoacyl-tRNA synthetase</keyword>
<keyword id="KW-0067">ATP-binding</keyword>
<keyword id="KW-0963">Cytoplasm</keyword>
<keyword id="KW-0436">Ligase</keyword>
<keyword id="KW-0479">Metal-binding</keyword>
<keyword id="KW-0547">Nucleotide-binding</keyword>
<keyword id="KW-0648">Protein biosynthesis</keyword>
<keyword id="KW-0862">Zinc</keyword>
<name>SYC_BURO1</name>
<reference key="1">
    <citation type="submission" date="2006-05" db="EMBL/GenBank/DDBJ databases">
        <title>Complete sequence of chromosome 3 of Burkholderia cenocepacia AU 1054.</title>
        <authorList>
            <consortium name="US DOE Joint Genome Institute"/>
            <person name="Copeland A."/>
            <person name="Lucas S."/>
            <person name="Lapidus A."/>
            <person name="Barry K."/>
            <person name="Detter J.C."/>
            <person name="Glavina del Rio T."/>
            <person name="Hammon N."/>
            <person name="Israni S."/>
            <person name="Dalin E."/>
            <person name="Tice H."/>
            <person name="Pitluck S."/>
            <person name="Chain P."/>
            <person name="Malfatti S."/>
            <person name="Shin M."/>
            <person name="Vergez L."/>
            <person name="Schmutz J."/>
            <person name="Larimer F."/>
            <person name="Land M."/>
            <person name="Hauser L."/>
            <person name="Kyrpides N."/>
            <person name="Lykidis A."/>
            <person name="LiPuma J.J."/>
            <person name="Konstantinidis K."/>
            <person name="Tiedje J.M."/>
            <person name="Richardson P."/>
        </authorList>
    </citation>
    <scope>NUCLEOTIDE SEQUENCE [LARGE SCALE GENOMIC DNA]</scope>
    <source>
        <strain>AU 1054</strain>
    </source>
</reference>
<feature type="chain" id="PRO_1000006565" description="Cysteine--tRNA ligase">
    <location>
        <begin position="1"/>
        <end position="465"/>
    </location>
</feature>
<feature type="short sequence motif" description="'HIGH' region">
    <location>
        <begin position="32"/>
        <end position="42"/>
    </location>
</feature>
<feature type="short sequence motif" description="'KMSKS' region">
    <location>
        <begin position="271"/>
        <end position="275"/>
    </location>
</feature>
<feature type="binding site" evidence="1">
    <location>
        <position position="30"/>
    </location>
    <ligand>
        <name>Zn(2+)</name>
        <dbReference type="ChEBI" id="CHEBI:29105"/>
    </ligand>
</feature>
<feature type="binding site" evidence="1">
    <location>
        <position position="214"/>
    </location>
    <ligand>
        <name>Zn(2+)</name>
        <dbReference type="ChEBI" id="CHEBI:29105"/>
    </ligand>
</feature>
<feature type="binding site" evidence="1">
    <location>
        <position position="239"/>
    </location>
    <ligand>
        <name>Zn(2+)</name>
        <dbReference type="ChEBI" id="CHEBI:29105"/>
    </ligand>
</feature>
<feature type="binding site" evidence="1">
    <location>
        <position position="243"/>
    </location>
    <ligand>
        <name>Zn(2+)</name>
        <dbReference type="ChEBI" id="CHEBI:29105"/>
    </ligand>
</feature>
<feature type="binding site" evidence="1">
    <location>
        <position position="274"/>
    </location>
    <ligand>
        <name>ATP</name>
        <dbReference type="ChEBI" id="CHEBI:30616"/>
    </ligand>
</feature>
<dbReference type="EC" id="6.1.1.16" evidence="1"/>
<dbReference type="EMBL" id="CP000380">
    <property type="protein sequence ID" value="ABF80864.1"/>
    <property type="molecule type" value="Genomic_DNA"/>
</dbReference>
<dbReference type="SMR" id="Q1BHP1"/>
<dbReference type="HOGENOM" id="CLU_013528_0_1_4"/>
<dbReference type="GO" id="GO:0005829">
    <property type="term" value="C:cytosol"/>
    <property type="evidence" value="ECO:0007669"/>
    <property type="project" value="TreeGrafter"/>
</dbReference>
<dbReference type="GO" id="GO:0005524">
    <property type="term" value="F:ATP binding"/>
    <property type="evidence" value="ECO:0007669"/>
    <property type="project" value="UniProtKB-UniRule"/>
</dbReference>
<dbReference type="GO" id="GO:0004817">
    <property type="term" value="F:cysteine-tRNA ligase activity"/>
    <property type="evidence" value="ECO:0007669"/>
    <property type="project" value="UniProtKB-UniRule"/>
</dbReference>
<dbReference type="GO" id="GO:0008270">
    <property type="term" value="F:zinc ion binding"/>
    <property type="evidence" value="ECO:0007669"/>
    <property type="project" value="UniProtKB-UniRule"/>
</dbReference>
<dbReference type="GO" id="GO:0006423">
    <property type="term" value="P:cysteinyl-tRNA aminoacylation"/>
    <property type="evidence" value="ECO:0007669"/>
    <property type="project" value="UniProtKB-UniRule"/>
</dbReference>
<dbReference type="CDD" id="cd07963">
    <property type="entry name" value="Anticodon_Ia_Cys"/>
    <property type="match status" value="1"/>
</dbReference>
<dbReference type="CDD" id="cd00672">
    <property type="entry name" value="CysRS_core"/>
    <property type="match status" value="1"/>
</dbReference>
<dbReference type="FunFam" id="3.40.50.620:FF:000009">
    <property type="entry name" value="Cysteine--tRNA ligase"/>
    <property type="match status" value="1"/>
</dbReference>
<dbReference type="Gene3D" id="1.20.120.1910">
    <property type="entry name" value="Cysteine-tRNA ligase, C-terminal anti-codon recognition domain"/>
    <property type="match status" value="1"/>
</dbReference>
<dbReference type="Gene3D" id="3.40.50.620">
    <property type="entry name" value="HUPs"/>
    <property type="match status" value="1"/>
</dbReference>
<dbReference type="HAMAP" id="MF_00041">
    <property type="entry name" value="Cys_tRNA_synth"/>
    <property type="match status" value="1"/>
</dbReference>
<dbReference type="InterPro" id="IPR015803">
    <property type="entry name" value="Cys-tRNA-ligase"/>
</dbReference>
<dbReference type="InterPro" id="IPR015273">
    <property type="entry name" value="Cys-tRNA-synt_Ia_DALR"/>
</dbReference>
<dbReference type="InterPro" id="IPR024909">
    <property type="entry name" value="Cys-tRNA/MSH_ligase"/>
</dbReference>
<dbReference type="InterPro" id="IPR056411">
    <property type="entry name" value="CysS_C"/>
</dbReference>
<dbReference type="InterPro" id="IPR014729">
    <property type="entry name" value="Rossmann-like_a/b/a_fold"/>
</dbReference>
<dbReference type="InterPro" id="IPR032678">
    <property type="entry name" value="tRNA-synt_1_cat_dom"/>
</dbReference>
<dbReference type="InterPro" id="IPR009080">
    <property type="entry name" value="tRNAsynth_Ia_anticodon-bd"/>
</dbReference>
<dbReference type="NCBIfam" id="TIGR00435">
    <property type="entry name" value="cysS"/>
    <property type="match status" value="1"/>
</dbReference>
<dbReference type="PANTHER" id="PTHR10890:SF3">
    <property type="entry name" value="CYSTEINE--TRNA LIGASE, CYTOPLASMIC"/>
    <property type="match status" value="1"/>
</dbReference>
<dbReference type="PANTHER" id="PTHR10890">
    <property type="entry name" value="CYSTEINYL-TRNA SYNTHETASE"/>
    <property type="match status" value="1"/>
</dbReference>
<dbReference type="Pfam" id="PF23493">
    <property type="entry name" value="CysS_C"/>
    <property type="match status" value="1"/>
</dbReference>
<dbReference type="Pfam" id="PF09190">
    <property type="entry name" value="DALR_2"/>
    <property type="match status" value="1"/>
</dbReference>
<dbReference type="Pfam" id="PF01406">
    <property type="entry name" value="tRNA-synt_1e"/>
    <property type="match status" value="1"/>
</dbReference>
<dbReference type="PRINTS" id="PR00983">
    <property type="entry name" value="TRNASYNTHCYS"/>
</dbReference>
<dbReference type="SMART" id="SM00840">
    <property type="entry name" value="DALR_2"/>
    <property type="match status" value="1"/>
</dbReference>
<dbReference type="SUPFAM" id="SSF47323">
    <property type="entry name" value="Anticodon-binding domain of a subclass of class I aminoacyl-tRNA synthetases"/>
    <property type="match status" value="1"/>
</dbReference>
<dbReference type="SUPFAM" id="SSF52374">
    <property type="entry name" value="Nucleotidylyl transferase"/>
    <property type="match status" value="1"/>
</dbReference>
<proteinExistence type="inferred from homology"/>
<accession>Q1BHP1</accession>
<evidence type="ECO:0000255" key="1">
    <source>
        <dbReference type="HAMAP-Rule" id="MF_00041"/>
    </source>
</evidence>